<gene>
    <name type="primary">iscU</name>
    <name type="synonym">nifU</name>
    <name type="ordered locus">M5005_Spy0245</name>
    <name type="ordered locus">SPy_0289</name>
</gene>
<dbReference type="EMBL" id="AE004092">
    <property type="protein sequence ID" value="AAK33358.1"/>
    <property type="molecule type" value="Genomic_DNA"/>
</dbReference>
<dbReference type="EMBL" id="CP000017">
    <property type="protein sequence ID" value="AAZ50864.1"/>
    <property type="molecule type" value="Genomic_DNA"/>
</dbReference>
<dbReference type="RefSeq" id="NP_268637.1">
    <property type="nucleotide sequence ID" value="NC_002737.2"/>
</dbReference>
<dbReference type="PDB" id="1SU0">
    <property type="method" value="X-ray"/>
    <property type="resolution" value="2.30 A"/>
    <property type="chains" value="B=1-159"/>
</dbReference>
<dbReference type="PDBsum" id="1SU0"/>
<dbReference type="SMR" id="Q9A1G2"/>
<dbReference type="PaxDb" id="1314-HKU360_00284"/>
<dbReference type="KEGG" id="spy:SPy_0289"/>
<dbReference type="KEGG" id="spz:M5005_Spy0245"/>
<dbReference type="PATRIC" id="fig|160490.10.peg.253"/>
<dbReference type="HOGENOM" id="CLU_079283_4_0_9"/>
<dbReference type="OMA" id="MKLDSMY"/>
<dbReference type="EvolutionaryTrace" id="Q9A1G2"/>
<dbReference type="Proteomes" id="UP000000750">
    <property type="component" value="Chromosome"/>
</dbReference>
<dbReference type="GO" id="GO:0005506">
    <property type="term" value="F:iron ion binding"/>
    <property type="evidence" value="ECO:0007669"/>
    <property type="project" value="InterPro"/>
</dbReference>
<dbReference type="GO" id="GO:0051536">
    <property type="term" value="F:iron-sulfur cluster binding"/>
    <property type="evidence" value="ECO:0007669"/>
    <property type="project" value="InterPro"/>
</dbReference>
<dbReference type="GO" id="GO:0016226">
    <property type="term" value="P:iron-sulfur cluster assembly"/>
    <property type="evidence" value="ECO:0007669"/>
    <property type="project" value="InterPro"/>
</dbReference>
<dbReference type="CDD" id="cd06664">
    <property type="entry name" value="IscU_like"/>
    <property type="match status" value="1"/>
</dbReference>
<dbReference type="FunFam" id="3.90.1010.10:FF:000002">
    <property type="entry name" value="Iron-sulfur cluster assembly scaffold protein NifU"/>
    <property type="match status" value="1"/>
</dbReference>
<dbReference type="Gene3D" id="3.90.1010.10">
    <property type="match status" value="1"/>
</dbReference>
<dbReference type="InterPro" id="IPR002871">
    <property type="entry name" value="NIF_FeS_clus_asmbl_NifU_N"/>
</dbReference>
<dbReference type="NCBIfam" id="TIGR01994">
    <property type="entry name" value="SUF_scaf_2"/>
    <property type="match status" value="1"/>
</dbReference>
<dbReference type="PANTHER" id="PTHR10093">
    <property type="entry name" value="IRON-SULFUR CLUSTER ASSEMBLY ENZYME NIFU HOMOLOG"/>
    <property type="match status" value="1"/>
</dbReference>
<dbReference type="Pfam" id="PF01592">
    <property type="entry name" value="NifU_N"/>
    <property type="match status" value="1"/>
</dbReference>
<dbReference type="SUPFAM" id="SSF82649">
    <property type="entry name" value="SufE/NifU"/>
    <property type="match status" value="1"/>
</dbReference>
<protein>
    <recommendedName>
        <fullName>Iron-sulfur cluster assembly scaffold protein IscU</fullName>
    </recommendedName>
    <alternativeName>
        <fullName>Sulfur acceptor protein IscU</fullName>
    </alternativeName>
</protein>
<accession>Q9A1G2</accession>
<accession>Q490V4</accession>
<name>ISCU_STRP1</name>
<feature type="chain" id="PRO_0000428753" description="Iron-sulfur cluster assembly scaffold protein IscU">
    <location>
        <begin position="1"/>
        <end position="159"/>
    </location>
</feature>
<feature type="binding site" evidence="2">
    <location>
        <position position="40"/>
    </location>
    <ligand>
        <name>Zn(2+)</name>
        <dbReference type="ChEBI" id="CHEBI:29105"/>
    </ligand>
</feature>
<feature type="binding site" evidence="2">
    <location>
        <position position="42"/>
    </location>
    <ligand>
        <name>Zn(2+)</name>
        <dbReference type="ChEBI" id="CHEBI:29105"/>
    </ligand>
</feature>
<feature type="binding site" evidence="2">
    <location>
        <position position="65"/>
    </location>
    <ligand>
        <name>Zn(2+)</name>
        <dbReference type="ChEBI" id="CHEBI:29105"/>
    </ligand>
</feature>
<feature type="binding site" evidence="2">
    <location>
        <position position="127"/>
    </location>
    <ligand>
        <name>Zn(2+)</name>
        <dbReference type="ChEBI" id="CHEBI:29105"/>
    </ligand>
</feature>
<feature type="helix" evidence="4">
    <location>
        <begin position="8"/>
        <end position="19"/>
    </location>
</feature>
<feature type="strand" evidence="4">
    <location>
        <begin position="22"/>
        <end position="25"/>
    </location>
</feature>
<feature type="strand" evidence="4">
    <location>
        <begin position="33"/>
        <end position="36"/>
    </location>
</feature>
<feature type="strand" evidence="4">
    <location>
        <begin position="38"/>
        <end position="40"/>
    </location>
</feature>
<feature type="strand" evidence="4">
    <location>
        <begin position="43"/>
        <end position="63"/>
    </location>
</feature>
<feature type="helix" evidence="4">
    <location>
        <begin position="66"/>
        <end position="79"/>
    </location>
</feature>
<feature type="helix" evidence="4">
    <location>
        <begin position="84"/>
        <end position="97"/>
    </location>
</feature>
<feature type="turn" evidence="4">
    <location>
        <begin position="98"/>
        <end position="100"/>
    </location>
</feature>
<feature type="helix" evidence="4">
    <location>
        <begin position="104"/>
        <end position="120"/>
    </location>
</feature>
<feature type="helix" evidence="4">
    <location>
        <begin position="122"/>
        <end position="139"/>
    </location>
</feature>
<keyword id="KW-0002">3D-structure</keyword>
<keyword id="KW-0479">Metal-binding</keyword>
<keyword id="KW-1185">Reference proteome</keyword>
<keyword id="KW-0862">Zinc</keyword>
<proteinExistence type="evidence at protein level"/>
<organism>
    <name type="scientific">Streptococcus pyogenes serotype M1</name>
    <dbReference type="NCBI Taxonomy" id="301447"/>
    <lineage>
        <taxon>Bacteria</taxon>
        <taxon>Bacillati</taxon>
        <taxon>Bacillota</taxon>
        <taxon>Bacilli</taxon>
        <taxon>Lactobacillales</taxon>
        <taxon>Streptococcaceae</taxon>
        <taxon>Streptococcus</taxon>
    </lineage>
</organism>
<evidence type="ECO:0000250" key="1"/>
<evidence type="ECO:0000269" key="2">
    <source>
    </source>
</evidence>
<evidence type="ECO:0000305" key="3"/>
<evidence type="ECO:0007829" key="4">
    <source>
        <dbReference type="PDB" id="1SU0"/>
    </source>
</evidence>
<comment type="function">
    <text evidence="1">A scaffold on which IscS assembles Fe-S clusters. Subsequently gives the nascent cluster to other proteins. It is likely that Fe-S cluster coordination is flexible as the role of this complex is to build and then hand off Fe-S clusters (By similarity).</text>
</comment>
<comment type="cofactor">
    <cofactor evidence="2">
        <name>Zn(2+)</name>
        <dbReference type="ChEBI" id="CHEBI:29105"/>
    </cofactor>
    <text evidence="2">Binds 1 Zn(2+) ion; this is probably a substitute for Fe-S centers.</text>
</comment>
<comment type="subunit">
    <text evidence="1">Forms a heterotetramer with IscS; each subunit of the IscS dimer contacts an IscU monomer.</text>
</comment>
<comment type="similarity">
    <text evidence="3">Belongs to the NifU family.</text>
</comment>
<reference key="1">
    <citation type="journal article" date="2001" name="Proc. Natl. Acad. Sci. U.S.A.">
        <title>Complete genome sequence of an M1 strain of Streptococcus pyogenes.</title>
        <authorList>
            <person name="Ferretti J.J."/>
            <person name="McShan W.M."/>
            <person name="Ajdic D.J."/>
            <person name="Savic D.J."/>
            <person name="Savic G."/>
            <person name="Lyon K."/>
            <person name="Primeaux C."/>
            <person name="Sezate S."/>
            <person name="Suvorov A.N."/>
            <person name="Kenton S."/>
            <person name="Lai H.S."/>
            <person name="Lin S.P."/>
            <person name="Qian Y."/>
            <person name="Jia H.G."/>
            <person name="Najar F.Z."/>
            <person name="Ren Q."/>
            <person name="Zhu H."/>
            <person name="Song L."/>
            <person name="White J."/>
            <person name="Yuan X."/>
            <person name="Clifton S.W."/>
            <person name="Roe B.A."/>
            <person name="McLaughlin R.E."/>
        </authorList>
    </citation>
    <scope>NUCLEOTIDE SEQUENCE [LARGE SCALE GENOMIC DNA]</scope>
    <source>
        <strain>ATCC 700294 / SF370 / Serotype M1</strain>
    </source>
</reference>
<reference key="2">
    <citation type="journal article" date="2005" name="J. Infect. Dis.">
        <title>Evolutionary origin and emergence of a highly successful clone of serotype M1 group A Streptococcus involved multiple horizontal gene transfer events.</title>
        <authorList>
            <person name="Sumby P."/>
            <person name="Porcella S.F."/>
            <person name="Madrigal A.G."/>
            <person name="Barbian K.D."/>
            <person name="Virtaneva K."/>
            <person name="Ricklefs S.M."/>
            <person name="Sturdevant D.E."/>
            <person name="Graham M.R."/>
            <person name="Vuopio-Varkila J."/>
            <person name="Hoe N.P."/>
            <person name="Musser J.M."/>
        </authorList>
    </citation>
    <scope>NUCLEOTIDE SEQUENCE [LARGE SCALE GENOMIC DNA]</scope>
    <source>
        <strain>ATCC BAA-947 / MGAS5005 / Serotype M1</strain>
    </source>
</reference>
<reference key="3">
    <citation type="journal article" date="2005" name="Proteins">
        <title>Structural characterization of an iron-sulfur cluster assembly protein IscU in a zinc-bound form.</title>
        <authorList>
            <person name="Liu J."/>
            <person name="Oganesyan N."/>
            <person name="Shin D.H."/>
            <person name="Jancarik J."/>
            <person name="Yokota H."/>
            <person name="Kim R."/>
            <person name="Kim S.H."/>
        </authorList>
    </citation>
    <scope>X-RAY CRYSTALLOGRAPHY (2.30 ANGSTROMS) IN COMPLEX WITH ZINC</scope>
    <scope>COFACTOR</scope>
    <source>
        <strain>ATCC 12344 / CIP 56.41 / DSM 20565 / JCM 5674 / NCTC 8198</strain>
    </source>
</reference>
<sequence>MALSKLNHLYMAVVADHSKRPHHHGQLDGVEAVQLNNPTCGDVISLTVKFDEDKIEDIAFAGNGCTISTASSSMMTDAVIGKSKEEALALADIFSEMVQGQENPAQKELGEAELLAGVAKFPQRIKCSTLAWNALKEAIKRSANAQHLTDQNVKEGKNV</sequence>